<comment type="function">
    <text evidence="1">Catalyzes the conversion of S-adenosyl-L-methionine (SAM) to carboxy-S-adenosyl-L-methionine (Cx-SAM).</text>
</comment>
<comment type="catalytic activity">
    <reaction evidence="1">
        <text>prephenate + S-adenosyl-L-methionine = carboxy-S-adenosyl-L-methionine + 3-phenylpyruvate + H2O</text>
        <dbReference type="Rhea" id="RHEA:51692"/>
        <dbReference type="ChEBI" id="CHEBI:15377"/>
        <dbReference type="ChEBI" id="CHEBI:18005"/>
        <dbReference type="ChEBI" id="CHEBI:29934"/>
        <dbReference type="ChEBI" id="CHEBI:59789"/>
        <dbReference type="ChEBI" id="CHEBI:134278"/>
    </reaction>
</comment>
<comment type="subunit">
    <text evidence="1">Homodimer.</text>
</comment>
<comment type="similarity">
    <text evidence="1">Belongs to the class I-like SAM-binding methyltransferase superfamily. Cx-SAM synthase family.</text>
</comment>
<keyword id="KW-1185">Reference proteome</keyword>
<keyword id="KW-0949">S-adenosyl-L-methionine</keyword>
<keyword id="KW-0808">Transferase</keyword>
<accession>Q6AIL1</accession>
<proteinExistence type="inferred from homology"/>
<dbReference type="EC" id="2.1.3.-" evidence="1"/>
<dbReference type="EMBL" id="CR522870">
    <property type="protein sequence ID" value="CAG37819.1"/>
    <property type="molecule type" value="Genomic_DNA"/>
</dbReference>
<dbReference type="RefSeq" id="WP_011190331.1">
    <property type="nucleotide sequence ID" value="NC_006138.1"/>
</dbReference>
<dbReference type="SMR" id="Q6AIL1"/>
<dbReference type="STRING" id="177439.DP3090"/>
<dbReference type="KEGG" id="dps:DP3090"/>
<dbReference type="eggNOG" id="COG2226">
    <property type="taxonomic scope" value="Bacteria"/>
</dbReference>
<dbReference type="HOGENOM" id="CLU_078475_0_0_7"/>
<dbReference type="OrthoDB" id="5386938at2"/>
<dbReference type="Proteomes" id="UP000000602">
    <property type="component" value="Chromosome"/>
</dbReference>
<dbReference type="GO" id="GO:0016743">
    <property type="term" value="F:carboxyl- or carbamoyltransferase activity"/>
    <property type="evidence" value="ECO:0007669"/>
    <property type="project" value="UniProtKB-UniRule"/>
</dbReference>
<dbReference type="GO" id="GO:1904047">
    <property type="term" value="F:S-adenosyl-L-methionine binding"/>
    <property type="evidence" value="ECO:0007669"/>
    <property type="project" value="UniProtKB-UniRule"/>
</dbReference>
<dbReference type="GO" id="GO:0002098">
    <property type="term" value="P:tRNA wobble uridine modification"/>
    <property type="evidence" value="ECO:0007669"/>
    <property type="project" value="InterPro"/>
</dbReference>
<dbReference type="CDD" id="cd02440">
    <property type="entry name" value="AdoMet_MTases"/>
    <property type="match status" value="1"/>
</dbReference>
<dbReference type="Gene3D" id="3.40.50.150">
    <property type="entry name" value="Vaccinia Virus protein VP39"/>
    <property type="match status" value="1"/>
</dbReference>
<dbReference type="HAMAP" id="MF_01589">
    <property type="entry name" value="Cx_SAM_synthase"/>
    <property type="match status" value="1"/>
</dbReference>
<dbReference type="InterPro" id="IPR005271">
    <property type="entry name" value="CmoA"/>
</dbReference>
<dbReference type="InterPro" id="IPR041698">
    <property type="entry name" value="Methyltransf_25"/>
</dbReference>
<dbReference type="InterPro" id="IPR029063">
    <property type="entry name" value="SAM-dependent_MTases_sf"/>
</dbReference>
<dbReference type="NCBIfam" id="TIGR00740">
    <property type="entry name" value="carboxy-S-adenosyl-L-methionine synthase CmoA"/>
    <property type="match status" value="1"/>
</dbReference>
<dbReference type="PANTHER" id="PTHR43861:SF2">
    <property type="entry name" value="CARBOXY-S-ADENOSYL-L-METHIONINE SYNTHASE"/>
    <property type="match status" value="1"/>
</dbReference>
<dbReference type="PANTHER" id="PTHR43861">
    <property type="entry name" value="TRANS-ACONITATE 2-METHYLTRANSFERASE-RELATED"/>
    <property type="match status" value="1"/>
</dbReference>
<dbReference type="Pfam" id="PF13649">
    <property type="entry name" value="Methyltransf_25"/>
    <property type="match status" value="1"/>
</dbReference>
<dbReference type="PIRSF" id="PIRSF006325">
    <property type="entry name" value="MeTrfase_bac"/>
    <property type="match status" value="1"/>
</dbReference>
<dbReference type="SUPFAM" id="SSF53335">
    <property type="entry name" value="S-adenosyl-L-methionine-dependent methyltransferases"/>
    <property type="match status" value="1"/>
</dbReference>
<name>CMOA_DESPS</name>
<gene>
    <name evidence="1" type="primary">cmoA</name>
    <name type="ordered locus">DP3090</name>
</gene>
<feature type="chain" id="PRO_0000314322" description="Carboxy-S-adenosyl-L-methionine synthase">
    <location>
        <begin position="1"/>
        <end position="245"/>
    </location>
</feature>
<feature type="binding site" evidence="1">
    <location>
        <position position="39"/>
    </location>
    <ligand>
        <name>S-adenosyl-L-methionine</name>
        <dbReference type="ChEBI" id="CHEBI:59789"/>
    </ligand>
</feature>
<feature type="binding site" evidence="1">
    <location>
        <begin position="64"/>
        <end position="66"/>
    </location>
    <ligand>
        <name>S-adenosyl-L-methionine</name>
        <dbReference type="ChEBI" id="CHEBI:59789"/>
    </ligand>
</feature>
<feature type="binding site" evidence="1">
    <location>
        <begin position="117"/>
        <end position="118"/>
    </location>
    <ligand>
        <name>S-adenosyl-L-methionine</name>
        <dbReference type="ChEBI" id="CHEBI:59789"/>
    </ligand>
</feature>
<feature type="binding site" evidence="1">
    <location>
        <position position="199"/>
    </location>
    <ligand>
        <name>S-adenosyl-L-methionine</name>
        <dbReference type="ChEBI" id="CHEBI:59789"/>
    </ligand>
</feature>
<reference key="1">
    <citation type="journal article" date="2004" name="Environ. Microbiol.">
        <title>The genome of Desulfotalea psychrophila, a sulfate-reducing bacterium from permanently cold Arctic sediments.</title>
        <authorList>
            <person name="Rabus R."/>
            <person name="Ruepp A."/>
            <person name="Frickey T."/>
            <person name="Rattei T."/>
            <person name="Fartmann B."/>
            <person name="Stark M."/>
            <person name="Bauer M."/>
            <person name="Zibat A."/>
            <person name="Lombardot T."/>
            <person name="Becker I."/>
            <person name="Amann J."/>
            <person name="Gellner K."/>
            <person name="Teeling H."/>
            <person name="Leuschner W.D."/>
            <person name="Gloeckner F.-O."/>
            <person name="Lupas A.N."/>
            <person name="Amann R."/>
            <person name="Klenk H.-P."/>
        </authorList>
    </citation>
    <scope>NUCLEOTIDE SEQUENCE [LARGE SCALE GENOMIC DNA]</scope>
    <source>
        <strain>DSM 12343 / LSv54</strain>
    </source>
</reference>
<sequence length="245" mass="28535">MTDKKDTIFQNPGPAEDFEFNSRVVEVFDDMLDRSVPFYKEVIQASAQLLQRHLKENDSVYDLGSSTGTTLLELSRVLKRQDISYVGIDASKPMLEKARLKAELYSKGDQFSFLEEDITQFCHQEAGAVILHYTLQFIRPMQREEVMRRIYASLRPGGVLLLSEKTISHQKELNRDFISIYHHFKKDRGYSELEIAQKREALENVLIPFSQNENKNLLKKVGFECVESYFQWFNFSSFMAIKPQP</sequence>
<organism>
    <name type="scientific">Desulfotalea psychrophila (strain LSv54 / DSM 12343)</name>
    <dbReference type="NCBI Taxonomy" id="177439"/>
    <lineage>
        <taxon>Bacteria</taxon>
        <taxon>Pseudomonadati</taxon>
        <taxon>Thermodesulfobacteriota</taxon>
        <taxon>Desulfobulbia</taxon>
        <taxon>Desulfobulbales</taxon>
        <taxon>Desulfocapsaceae</taxon>
        <taxon>Desulfotalea</taxon>
    </lineage>
</organism>
<protein>
    <recommendedName>
        <fullName evidence="1">Carboxy-S-adenosyl-L-methionine synthase</fullName>
        <shortName evidence="1">Cx-SAM synthase</shortName>
        <ecNumber evidence="1">2.1.3.-</ecNumber>
    </recommendedName>
</protein>
<evidence type="ECO:0000255" key="1">
    <source>
        <dbReference type="HAMAP-Rule" id="MF_01589"/>
    </source>
</evidence>